<feature type="chain" id="PRO_0000196962" description="2,3,4,5-tetrahydropyridine-2,6-dicarboxylate N-succinyltransferase">
    <location>
        <begin position="1"/>
        <end position="274"/>
    </location>
</feature>
<feature type="binding site" evidence="1">
    <location>
        <position position="106"/>
    </location>
    <ligand>
        <name>substrate</name>
    </ligand>
</feature>
<feature type="binding site" evidence="1">
    <location>
        <position position="143"/>
    </location>
    <ligand>
        <name>substrate</name>
    </ligand>
</feature>
<sequence>MSSLIKEIEEAWQIKDKLLQDSSKLITLKQTLNDIIESLNQGTIRVCEKQENSWHVNEWVKKAILLYFITTESQLYNNNYNSWYDKVAPKFSADTDKNTFKEAAIRKVPGAVVRTGTYIAKNVVIMPSFINIGAYIDEGTMIDTWATIGSCAQIGKNCHISGGTGIGGVLEPLQAKPVIIEDNCFIGARSEIAEGVIVEEGAVISMGVFIGSSTKIVYRDTGEIIYGRIPAYSVVVPGVLPAKEAGKPGLYCVVIVKQVDKTTRAKVSINDLLR</sequence>
<dbReference type="EC" id="2.3.1.117" evidence="1"/>
<dbReference type="EMBL" id="AE006914">
    <property type="protein sequence ID" value="AAL02781.1"/>
    <property type="status" value="ALT_INIT"/>
    <property type="molecule type" value="Genomic_DNA"/>
</dbReference>
<dbReference type="PIR" id="C97730">
    <property type="entry name" value="C97730"/>
</dbReference>
<dbReference type="RefSeq" id="WP_010976906.1">
    <property type="nucleotide sequence ID" value="NC_003103.1"/>
</dbReference>
<dbReference type="SMR" id="Q92J26"/>
<dbReference type="GeneID" id="927940"/>
<dbReference type="KEGG" id="rco:RC0243"/>
<dbReference type="PATRIC" id="fig|272944.4.peg.282"/>
<dbReference type="HOGENOM" id="CLU_050859_0_1_5"/>
<dbReference type="UniPathway" id="UPA00034">
    <property type="reaction ID" value="UER00019"/>
</dbReference>
<dbReference type="Proteomes" id="UP000000816">
    <property type="component" value="Chromosome"/>
</dbReference>
<dbReference type="GO" id="GO:0005737">
    <property type="term" value="C:cytoplasm"/>
    <property type="evidence" value="ECO:0007669"/>
    <property type="project" value="UniProtKB-SubCell"/>
</dbReference>
<dbReference type="GO" id="GO:0008666">
    <property type="term" value="F:2,3,4,5-tetrahydropyridine-2,6-dicarboxylate N-succinyltransferase activity"/>
    <property type="evidence" value="ECO:0007669"/>
    <property type="project" value="UniProtKB-UniRule"/>
</dbReference>
<dbReference type="GO" id="GO:0019877">
    <property type="term" value="P:diaminopimelate biosynthetic process"/>
    <property type="evidence" value="ECO:0007669"/>
    <property type="project" value="UniProtKB-UniRule"/>
</dbReference>
<dbReference type="GO" id="GO:0009089">
    <property type="term" value="P:lysine biosynthetic process via diaminopimelate"/>
    <property type="evidence" value="ECO:0007669"/>
    <property type="project" value="UniProtKB-UniRule"/>
</dbReference>
<dbReference type="CDD" id="cd03350">
    <property type="entry name" value="LbH_THP_succinylT"/>
    <property type="match status" value="1"/>
</dbReference>
<dbReference type="Gene3D" id="2.160.10.10">
    <property type="entry name" value="Hexapeptide repeat proteins"/>
    <property type="match status" value="1"/>
</dbReference>
<dbReference type="Gene3D" id="1.10.166.10">
    <property type="entry name" value="Tetrahydrodipicolinate-N-succinyltransferase, N-terminal domain"/>
    <property type="match status" value="1"/>
</dbReference>
<dbReference type="HAMAP" id="MF_00811">
    <property type="entry name" value="DapD"/>
    <property type="match status" value="1"/>
</dbReference>
<dbReference type="InterPro" id="IPR005664">
    <property type="entry name" value="DapD_Trfase_Hexpep_rpt_fam"/>
</dbReference>
<dbReference type="InterPro" id="IPR001451">
    <property type="entry name" value="Hexapep"/>
</dbReference>
<dbReference type="InterPro" id="IPR023180">
    <property type="entry name" value="THP_succinylTrfase_dom1"/>
</dbReference>
<dbReference type="InterPro" id="IPR037133">
    <property type="entry name" value="THP_succinylTrfase_N_sf"/>
</dbReference>
<dbReference type="InterPro" id="IPR050179">
    <property type="entry name" value="Trans_hexapeptide_repeat"/>
</dbReference>
<dbReference type="InterPro" id="IPR011004">
    <property type="entry name" value="Trimer_LpxA-like_sf"/>
</dbReference>
<dbReference type="NCBIfam" id="TIGR00965">
    <property type="entry name" value="dapD"/>
    <property type="match status" value="1"/>
</dbReference>
<dbReference type="NCBIfam" id="NF008808">
    <property type="entry name" value="PRK11830.1"/>
    <property type="match status" value="1"/>
</dbReference>
<dbReference type="PANTHER" id="PTHR43300:SF10">
    <property type="entry name" value="2,3,4,5-TETRAHYDROPYRIDINE-2,6-DICARBOXYLATE N-ACETYLTRANSFERASE"/>
    <property type="match status" value="1"/>
</dbReference>
<dbReference type="PANTHER" id="PTHR43300">
    <property type="entry name" value="ACETYLTRANSFERASE"/>
    <property type="match status" value="1"/>
</dbReference>
<dbReference type="Pfam" id="PF00132">
    <property type="entry name" value="Hexapep"/>
    <property type="match status" value="1"/>
</dbReference>
<dbReference type="Pfam" id="PF14602">
    <property type="entry name" value="Hexapep_2"/>
    <property type="match status" value="1"/>
</dbReference>
<dbReference type="Pfam" id="PF14805">
    <property type="entry name" value="THDPS_N_2"/>
    <property type="match status" value="1"/>
</dbReference>
<dbReference type="SUPFAM" id="SSF51161">
    <property type="entry name" value="Trimeric LpxA-like enzymes"/>
    <property type="match status" value="1"/>
</dbReference>
<organism>
    <name type="scientific">Rickettsia conorii (strain ATCC VR-613 / Malish 7)</name>
    <dbReference type="NCBI Taxonomy" id="272944"/>
    <lineage>
        <taxon>Bacteria</taxon>
        <taxon>Pseudomonadati</taxon>
        <taxon>Pseudomonadota</taxon>
        <taxon>Alphaproteobacteria</taxon>
        <taxon>Rickettsiales</taxon>
        <taxon>Rickettsiaceae</taxon>
        <taxon>Rickettsieae</taxon>
        <taxon>Rickettsia</taxon>
        <taxon>spotted fever group</taxon>
    </lineage>
</organism>
<evidence type="ECO:0000255" key="1">
    <source>
        <dbReference type="HAMAP-Rule" id="MF_00811"/>
    </source>
</evidence>
<evidence type="ECO:0000305" key="2"/>
<gene>
    <name evidence="1" type="primary">dapD</name>
    <name type="ordered locus">RC0243</name>
</gene>
<keyword id="KW-0012">Acyltransferase</keyword>
<keyword id="KW-0028">Amino-acid biosynthesis</keyword>
<keyword id="KW-0963">Cytoplasm</keyword>
<keyword id="KW-0220">Diaminopimelate biosynthesis</keyword>
<keyword id="KW-0457">Lysine biosynthesis</keyword>
<keyword id="KW-0677">Repeat</keyword>
<keyword id="KW-0808">Transferase</keyword>
<protein>
    <recommendedName>
        <fullName evidence="1">2,3,4,5-tetrahydropyridine-2,6-dicarboxylate N-succinyltransferase</fullName>
        <ecNumber evidence="1">2.3.1.117</ecNumber>
    </recommendedName>
    <alternativeName>
        <fullName evidence="1">Tetrahydrodipicolinate N-succinyltransferase</fullName>
        <shortName evidence="1">THDP succinyltransferase</shortName>
        <shortName evidence="1">THP succinyltransferase</shortName>
        <shortName evidence="1">Tetrahydropicolinate succinylase</shortName>
    </alternativeName>
</protein>
<name>DAPD_RICCN</name>
<reference key="1">
    <citation type="journal article" date="2001" name="Science">
        <title>Mechanisms of evolution in Rickettsia conorii and R. prowazekii.</title>
        <authorList>
            <person name="Ogata H."/>
            <person name="Audic S."/>
            <person name="Renesto-Audiffren P."/>
            <person name="Fournier P.-E."/>
            <person name="Barbe V."/>
            <person name="Samson D."/>
            <person name="Roux V."/>
            <person name="Cossart P."/>
            <person name="Weissenbach J."/>
            <person name="Claverie J.-M."/>
            <person name="Raoult D."/>
        </authorList>
    </citation>
    <scope>NUCLEOTIDE SEQUENCE [LARGE SCALE GENOMIC DNA]</scope>
    <source>
        <strain>ATCC VR-613 / Malish 7</strain>
    </source>
</reference>
<proteinExistence type="inferred from homology"/>
<accession>Q92J26</accession>
<comment type="catalytic activity">
    <reaction evidence="1">
        <text>(S)-2,3,4,5-tetrahydrodipicolinate + succinyl-CoA + H2O = (S)-2-succinylamino-6-oxoheptanedioate + CoA</text>
        <dbReference type="Rhea" id="RHEA:17325"/>
        <dbReference type="ChEBI" id="CHEBI:15377"/>
        <dbReference type="ChEBI" id="CHEBI:15685"/>
        <dbReference type="ChEBI" id="CHEBI:16845"/>
        <dbReference type="ChEBI" id="CHEBI:57287"/>
        <dbReference type="ChEBI" id="CHEBI:57292"/>
        <dbReference type="EC" id="2.3.1.117"/>
    </reaction>
</comment>
<comment type="pathway">
    <text evidence="1">Amino-acid biosynthesis; L-lysine biosynthesis via DAP pathway; LL-2,6-diaminopimelate from (S)-tetrahydrodipicolinate (succinylase route): step 1/3.</text>
</comment>
<comment type="subunit">
    <text evidence="1">Homotrimer.</text>
</comment>
<comment type="subcellular location">
    <subcellularLocation>
        <location evidence="1">Cytoplasm</location>
    </subcellularLocation>
</comment>
<comment type="similarity">
    <text evidence="1">Belongs to the transferase hexapeptide repeat family.</text>
</comment>
<comment type="sequence caution" evidence="2">
    <conflict type="erroneous initiation">
        <sequence resource="EMBL-CDS" id="AAL02781"/>
    </conflict>
</comment>